<feature type="chain" id="PRO_0000393832" description="Methylthioribulose-1-phosphate dehydratase">
    <location>
        <begin position="1"/>
        <end position="240"/>
    </location>
</feature>
<feature type="region of interest" description="Disordered" evidence="2">
    <location>
        <begin position="1"/>
        <end position="20"/>
    </location>
</feature>
<feature type="compositionally biased region" description="Polar residues" evidence="2">
    <location>
        <begin position="1"/>
        <end position="17"/>
    </location>
</feature>
<feature type="active site" description="Proton donor/acceptor" evidence="1">
    <location>
        <position position="146"/>
    </location>
</feature>
<feature type="binding site" evidence="1">
    <location>
        <position position="100"/>
    </location>
    <ligand>
        <name>substrate</name>
    </ligand>
</feature>
<feature type="binding site" evidence="1">
    <location>
        <position position="117"/>
    </location>
    <ligand>
        <name>Zn(2+)</name>
        <dbReference type="ChEBI" id="CHEBI:29105"/>
    </ligand>
</feature>
<feature type="binding site" evidence="1">
    <location>
        <position position="119"/>
    </location>
    <ligand>
        <name>Zn(2+)</name>
        <dbReference type="ChEBI" id="CHEBI:29105"/>
    </ligand>
</feature>
<feature type="binding site" evidence="1">
    <location>
        <position position="202"/>
    </location>
    <ligand>
        <name>Zn(2+)</name>
        <dbReference type="ChEBI" id="CHEBI:29105"/>
    </ligand>
</feature>
<accession>A1CW59</accession>
<evidence type="ECO:0000255" key="1">
    <source>
        <dbReference type="HAMAP-Rule" id="MF_03116"/>
    </source>
</evidence>
<evidence type="ECO:0000256" key="2">
    <source>
        <dbReference type="SAM" id="MobiDB-lite"/>
    </source>
</evidence>
<proteinExistence type="inferred from homology"/>
<reference key="1">
    <citation type="journal article" date="2008" name="PLoS Genet.">
        <title>Genomic islands in the pathogenic filamentous fungus Aspergillus fumigatus.</title>
        <authorList>
            <person name="Fedorova N.D."/>
            <person name="Khaldi N."/>
            <person name="Joardar V.S."/>
            <person name="Maiti R."/>
            <person name="Amedeo P."/>
            <person name="Anderson M.J."/>
            <person name="Crabtree J."/>
            <person name="Silva J.C."/>
            <person name="Badger J.H."/>
            <person name="Albarraq A."/>
            <person name="Angiuoli S."/>
            <person name="Bussey H."/>
            <person name="Bowyer P."/>
            <person name="Cotty P.J."/>
            <person name="Dyer P.S."/>
            <person name="Egan A."/>
            <person name="Galens K."/>
            <person name="Fraser-Liggett C.M."/>
            <person name="Haas B.J."/>
            <person name="Inman J.M."/>
            <person name="Kent R."/>
            <person name="Lemieux S."/>
            <person name="Malavazi I."/>
            <person name="Orvis J."/>
            <person name="Roemer T."/>
            <person name="Ronning C.M."/>
            <person name="Sundaram J.P."/>
            <person name="Sutton G."/>
            <person name="Turner G."/>
            <person name="Venter J.C."/>
            <person name="White O.R."/>
            <person name="Whitty B.R."/>
            <person name="Youngman P."/>
            <person name="Wolfe K.H."/>
            <person name="Goldman G.H."/>
            <person name="Wortman J.R."/>
            <person name="Jiang B."/>
            <person name="Denning D.W."/>
            <person name="Nierman W.C."/>
        </authorList>
    </citation>
    <scope>NUCLEOTIDE SEQUENCE [LARGE SCALE GENOMIC DNA]</scope>
    <source>
        <strain>ATCC 1020 / DSM 3700 / CBS 544.65 / FGSC A1164 / JCM 1740 / NRRL 181 / WB 181</strain>
    </source>
</reference>
<comment type="function">
    <text evidence="1">Catalyzes the dehydration of methylthioribulose-1-phosphate (MTRu-1-P) into 2,3-diketo-5-methylthiopentyl-1-phosphate (DK-MTP-1-P).</text>
</comment>
<comment type="catalytic activity">
    <reaction evidence="1">
        <text>5-(methylsulfanyl)-D-ribulose 1-phosphate = 5-methylsulfanyl-2,3-dioxopentyl phosphate + H2O</text>
        <dbReference type="Rhea" id="RHEA:15549"/>
        <dbReference type="ChEBI" id="CHEBI:15377"/>
        <dbReference type="ChEBI" id="CHEBI:58548"/>
        <dbReference type="ChEBI" id="CHEBI:58828"/>
        <dbReference type="EC" id="4.2.1.109"/>
    </reaction>
</comment>
<comment type="cofactor">
    <cofactor evidence="1">
        <name>Zn(2+)</name>
        <dbReference type="ChEBI" id="CHEBI:29105"/>
    </cofactor>
    <text evidence="1">Binds 1 zinc ion per subunit.</text>
</comment>
<comment type="pathway">
    <text evidence="1">Amino-acid biosynthesis; L-methionine biosynthesis via salvage pathway; L-methionine from S-methyl-5-thio-alpha-D-ribose 1-phosphate: step 2/6.</text>
</comment>
<comment type="subcellular location">
    <subcellularLocation>
        <location evidence="1">Cytoplasm</location>
    </subcellularLocation>
</comment>
<comment type="similarity">
    <text evidence="1">Belongs to the aldolase class II family. MtnB subfamily.</text>
</comment>
<name>MTNB_NEOFI</name>
<keyword id="KW-0028">Amino-acid biosynthesis</keyword>
<keyword id="KW-0963">Cytoplasm</keyword>
<keyword id="KW-0456">Lyase</keyword>
<keyword id="KW-0479">Metal-binding</keyword>
<keyword id="KW-0486">Methionine biosynthesis</keyword>
<keyword id="KW-1185">Reference proteome</keyword>
<keyword id="KW-0862">Zinc</keyword>
<protein>
    <recommendedName>
        <fullName evidence="1">Methylthioribulose-1-phosphate dehydratase</fullName>
        <shortName evidence="1">MTRu-1-P dehydratase</shortName>
        <ecNumber evidence="1">4.2.1.109</ecNumber>
    </recommendedName>
</protein>
<organism>
    <name type="scientific">Neosartorya fischeri (strain ATCC 1020 / DSM 3700 / CBS 544.65 / FGSC A1164 / JCM 1740 / NRRL 181 / WB 181)</name>
    <name type="common">Aspergillus fischerianus</name>
    <dbReference type="NCBI Taxonomy" id="331117"/>
    <lineage>
        <taxon>Eukaryota</taxon>
        <taxon>Fungi</taxon>
        <taxon>Dikarya</taxon>
        <taxon>Ascomycota</taxon>
        <taxon>Pezizomycotina</taxon>
        <taxon>Eurotiomycetes</taxon>
        <taxon>Eurotiomycetidae</taxon>
        <taxon>Eurotiales</taxon>
        <taxon>Aspergillaceae</taxon>
        <taxon>Aspergillus</taxon>
        <taxon>Aspergillus subgen. Fumigati</taxon>
    </lineage>
</organism>
<gene>
    <name evidence="1" type="primary">mde1</name>
    <name type="ORF">NFIA_103490</name>
</gene>
<dbReference type="EC" id="4.2.1.109" evidence="1"/>
<dbReference type="EMBL" id="DS027685">
    <property type="protein sequence ID" value="EAW24861.1"/>
    <property type="molecule type" value="Genomic_DNA"/>
</dbReference>
<dbReference type="RefSeq" id="XP_001266758.1">
    <property type="nucleotide sequence ID" value="XM_001266757.1"/>
</dbReference>
<dbReference type="SMR" id="A1CW59"/>
<dbReference type="STRING" id="331117.A1CW59"/>
<dbReference type="EnsemblFungi" id="EAW24861">
    <property type="protein sequence ID" value="EAW24861"/>
    <property type="gene ID" value="NFIA_103490"/>
</dbReference>
<dbReference type="GeneID" id="4594146"/>
<dbReference type="KEGG" id="nfi:NFIA_103490"/>
<dbReference type="VEuPathDB" id="FungiDB:NFIA_103490"/>
<dbReference type="eggNOG" id="KOG2631">
    <property type="taxonomic scope" value="Eukaryota"/>
</dbReference>
<dbReference type="HOGENOM" id="CLU_006033_4_0_1"/>
<dbReference type="OMA" id="WFPGTSG"/>
<dbReference type="OrthoDB" id="191080at2759"/>
<dbReference type="UniPathway" id="UPA00904">
    <property type="reaction ID" value="UER00875"/>
</dbReference>
<dbReference type="Proteomes" id="UP000006702">
    <property type="component" value="Unassembled WGS sequence"/>
</dbReference>
<dbReference type="GO" id="GO:0005737">
    <property type="term" value="C:cytoplasm"/>
    <property type="evidence" value="ECO:0007669"/>
    <property type="project" value="UniProtKB-SubCell"/>
</dbReference>
<dbReference type="GO" id="GO:0046570">
    <property type="term" value="F:methylthioribulose 1-phosphate dehydratase activity"/>
    <property type="evidence" value="ECO:0007669"/>
    <property type="project" value="UniProtKB-UniRule"/>
</dbReference>
<dbReference type="GO" id="GO:0008270">
    <property type="term" value="F:zinc ion binding"/>
    <property type="evidence" value="ECO:0007669"/>
    <property type="project" value="UniProtKB-UniRule"/>
</dbReference>
<dbReference type="GO" id="GO:0019509">
    <property type="term" value="P:L-methionine salvage from methylthioadenosine"/>
    <property type="evidence" value="ECO:0007669"/>
    <property type="project" value="UniProtKB-UniRule"/>
</dbReference>
<dbReference type="FunFam" id="3.40.225.10:FF:000003">
    <property type="entry name" value="Methylthioribulose-1-phosphate dehydratase"/>
    <property type="match status" value="1"/>
</dbReference>
<dbReference type="Gene3D" id="3.40.225.10">
    <property type="entry name" value="Class II aldolase/adducin N-terminal domain"/>
    <property type="match status" value="1"/>
</dbReference>
<dbReference type="HAMAP" id="MF_03116">
    <property type="entry name" value="Salvage_MtnB_euk"/>
    <property type="match status" value="1"/>
</dbReference>
<dbReference type="InterPro" id="IPR001303">
    <property type="entry name" value="Aldolase_II/adducin_N"/>
</dbReference>
<dbReference type="InterPro" id="IPR036409">
    <property type="entry name" value="Aldolase_II/adducin_N_sf"/>
</dbReference>
<dbReference type="InterPro" id="IPR017714">
    <property type="entry name" value="MethylthioRu-1-P_deHdtase_MtnB"/>
</dbReference>
<dbReference type="InterPro" id="IPR027514">
    <property type="entry name" value="Salvage_MtnB_euk"/>
</dbReference>
<dbReference type="NCBIfam" id="TIGR03328">
    <property type="entry name" value="salvage_mtnB"/>
    <property type="match status" value="1"/>
</dbReference>
<dbReference type="PANTHER" id="PTHR10640">
    <property type="entry name" value="METHYLTHIORIBULOSE-1-PHOSPHATE DEHYDRATASE"/>
    <property type="match status" value="1"/>
</dbReference>
<dbReference type="PANTHER" id="PTHR10640:SF7">
    <property type="entry name" value="METHYLTHIORIBULOSE-1-PHOSPHATE DEHYDRATASE"/>
    <property type="match status" value="1"/>
</dbReference>
<dbReference type="Pfam" id="PF00596">
    <property type="entry name" value="Aldolase_II"/>
    <property type="match status" value="1"/>
</dbReference>
<dbReference type="SMART" id="SM01007">
    <property type="entry name" value="Aldolase_II"/>
    <property type="match status" value="1"/>
</dbReference>
<dbReference type="SUPFAM" id="SSF53639">
    <property type="entry name" value="AraD/HMP-PK domain-like"/>
    <property type="match status" value="1"/>
</dbReference>
<sequence>MAQEVENNNNDHLVQSSDPEHPANLIPELCRKFYNWGWVTGTGGGTSIRRGDHIFIAPSGVQKELIQPHNIFVLEFPTPKYPPSDRKYIRKPLELKPSACTPLFLTAFERGAGCCIHTHSQWAVLVTLLVEREKGPDACFEISNIEQIKGIPRGKGKGMLGFFDTLKIPIIENTAFEEDLTGSLEKAMDQYPDTYAVLVRRHGIYVWGDDVAKAKTQCESLDYLFQLAVEMHKLGLPWVK</sequence>